<protein>
    <recommendedName>
        <fullName>Signiferin-4.2</fullName>
    </recommendedName>
</protein>
<dbReference type="GO" id="GO:0005576">
    <property type="term" value="C:extracellular region"/>
    <property type="evidence" value="ECO:0000314"/>
    <property type="project" value="UniProtKB"/>
</dbReference>
<dbReference type="GO" id="GO:0006952">
    <property type="term" value="P:defense response"/>
    <property type="evidence" value="ECO:0007669"/>
    <property type="project" value="UniProtKB-KW"/>
</dbReference>
<dbReference type="GO" id="GO:0051001">
    <property type="term" value="P:negative regulation of nitric-oxide synthase activity"/>
    <property type="evidence" value="ECO:0000314"/>
    <property type="project" value="UniProtKB"/>
</dbReference>
<name>SIG42_CRISI</name>
<reference evidence="4" key="1">
    <citation type="journal article" date="2004" name="Rapid Commun. Mass Spectrom.">
        <title>Host-defence skin peptides of the Australian common froglet Crinia signifera: sequence determination using positive and negative ion electrospray mass spectra.</title>
        <authorList>
            <person name="Maselli V.M."/>
            <person name="Brinkworth C.S."/>
            <person name="Bowie J.H."/>
            <person name="Tyler M.J."/>
        </authorList>
    </citation>
    <scope>PROTEIN SEQUENCE</scope>
    <scope>SUBCELLULAR LOCATION</scope>
    <scope>TISSUE SPECIFICITY</scope>
    <scope>AMIDATION AT SER-15</scope>
    <source>
        <tissue evidence="1">Skin secretion</tissue>
    </source>
</reference>
<reference evidence="4" key="2">
    <citation type="journal article" date="2006" name="Rapid Commun. Mass Spectrom.">
        <title>Host-defence skin peptides of the Australian streambank froglet Crinia riparia: isolation and sequence determination by positive and negative ion electrospray mass spectrometry.</title>
        <authorList>
            <person name="Maselli V.M."/>
            <person name="Bilusich D."/>
            <person name="Bowie J.H."/>
            <person name="Tyler M.J."/>
        </authorList>
    </citation>
    <scope>FUNCTION</scope>
</reference>
<reference evidence="4" key="3">
    <citation type="journal article" date="2008" name="Regul. Pept.">
        <title>Disulfide-containing peptides from the glandular skin secretions of froglets of the genus Crinia: structure, activity and evolutionary trends.</title>
        <authorList>
            <person name="Jackway R.J."/>
            <person name="Pukala T.L."/>
            <person name="Maselli V.M."/>
            <person name="Musgrave I.F."/>
            <person name="Bowie J.H."/>
            <person name="Liu Y."/>
            <person name="Surinya-Johnson K.H."/>
            <person name="Donnellan S.C."/>
            <person name="Doyle J.R."/>
            <person name="Llewellyn L.E."/>
            <person name="Tyler M.J."/>
        </authorList>
    </citation>
    <scope>FUNCTION</scope>
    <scope>DISCUSSION OF SEQUENCE</scope>
</reference>
<evidence type="ECO:0000269" key="1">
    <source>
    </source>
</evidence>
<evidence type="ECO:0000269" key="2">
    <source>
    </source>
</evidence>
<evidence type="ECO:0000269" key="3">
    <source>
    </source>
</evidence>
<evidence type="ECO:0000305" key="4"/>
<accession>P86134</accession>
<organism>
    <name type="scientific">Crinia signifera</name>
    <name type="common">Common eastern froglet</name>
    <dbReference type="NCBI Taxonomy" id="326986"/>
    <lineage>
        <taxon>Eukaryota</taxon>
        <taxon>Metazoa</taxon>
        <taxon>Chordata</taxon>
        <taxon>Craniata</taxon>
        <taxon>Vertebrata</taxon>
        <taxon>Euteleostomi</taxon>
        <taxon>Amphibia</taxon>
        <taxon>Batrachia</taxon>
        <taxon>Anura</taxon>
        <taxon>Neobatrachia</taxon>
        <taxon>Myobatrachoidea</taxon>
        <taxon>Myobatrachidae</taxon>
        <taxon>Myobatrachinae</taxon>
        <taxon>Crinia</taxon>
    </lineage>
</organism>
<proteinExistence type="evidence at protein level"/>
<feature type="peptide" id="PRO_0000371745" description="Signiferin-4.2">
    <location>
        <begin position="1"/>
        <end position="15"/>
    </location>
</feature>
<feature type="modified residue" description="Serine amide" evidence="1">
    <location>
        <position position="15"/>
    </location>
</feature>
<sequence length="15" mass="1615">GFADLFGKAVDFIKS</sequence>
<comment type="function">
    <text evidence="2 3">Inhibits the formation of NO by neuronal nitric oxide synthase with an IC(50) of 26.4 uM.</text>
</comment>
<comment type="subcellular location">
    <subcellularLocation>
        <location evidence="1">Secreted</location>
    </subcellularLocation>
</comment>
<comment type="tissue specificity">
    <text evidence="1">Expressed by the skin glands.</text>
</comment>
<keyword id="KW-0027">Amidation</keyword>
<keyword id="KW-0878">Amphibian defense peptide</keyword>
<keyword id="KW-0903">Direct protein sequencing</keyword>
<keyword id="KW-0964">Secreted</keyword>